<sequence>MQASIQNRIFFGLVVLWSTTVLEPLRAIPRMDLNDYPQPIAGHQRWVIQLPGLLAKSSDPGLSTNAVDWRVQLIVGRTIQLVCNQYHLAGQGLRMERFQGAEQRMLYSVAGAVKVMSTRMVCPPDEPKRESFLVLGSKPYLVPYNASFPIVVDVPDGLEVRWRLWKAEITQREAIKL</sequence>
<gene>
    <name evidence="1" type="primary">eco</name>
    <name type="ordered locus">PMT_2221</name>
</gene>
<dbReference type="EMBL" id="BX548175">
    <property type="protein sequence ID" value="CAE22395.1"/>
    <property type="molecule type" value="Genomic_DNA"/>
</dbReference>
<dbReference type="RefSeq" id="WP_011131585.1">
    <property type="nucleotide sequence ID" value="NC_005071.1"/>
</dbReference>
<dbReference type="SMR" id="P59839"/>
<dbReference type="KEGG" id="pmt:PMT_2221"/>
<dbReference type="eggNOG" id="COG4574">
    <property type="taxonomic scope" value="Bacteria"/>
</dbReference>
<dbReference type="HOGENOM" id="CLU_1516607_0_0_3"/>
<dbReference type="OrthoDB" id="997196at2"/>
<dbReference type="Proteomes" id="UP000001423">
    <property type="component" value="Chromosome"/>
</dbReference>
<dbReference type="GO" id="GO:0042597">
    <property type="term" value="C:periplasmic space"/>
    <property type="evidence" value="ECO:0007669"/>
    <property type="project" value="UniProtKB-SubCell"/>
</dbReference>
<dbReference type="GO" id="GO:0004867">
    <property type="term" value="F:serine-type endopeptidase inhibitor activity"/>
    <property type="evidence" value="ECO:0007669"/>
    <property type="project" value="UniProtKB-UniRule"/>
</dbReference>
<dbReference type="Gene3D" id="2.60.40.550">
    <property type="entry name" value="Ecotin"/>
    <property type="match status" value="1"/>
</dbReference>
<dbReference type="HAMAP" id="MF_00706">
    <property type="entry name" value="Ecotin"/>
    <property type="match status" value="1"/>
</dbReference>
<dbReference type="InterPro" id="IPR036198">
    <property type="entry name" value="Ecotin_sf"/>
</dbReference>
<dbReference type="InterPro" id="IPR005658">
    <property type="entry name" value="Prot_inh_ecotin"/>
</dbReference>
<dbReference type="InterPro" id="IPR023084">
    <property type="entry name" value="Prot_inh_ecotin_gammaproteobac"/>
</dbReference>
<dbReference type="PANTHER" id="PTHR35890">
    <property type="match status" value="1"/>
</dbReference>
<dbReference type="PANTHER" id="PTHR35890:SF3">
    <property type="entry name" value="ECOTIN"/>
    <property type="match status" value="1"/>
</dbReference>
<dbReference type="Pfam" id="PF03974">
    <property type="entry name" value="Ecotin"/>
    <property type="match status" value="1"/>
</dbReference>
<dbReference type="PIRSF" id="PIRSF006865">
    <property type="entry name" value="Prot_inh_ecotin"/>
    <property type="match status" value="1"/>
</dbReference>
<dbReference type="SUPFAM" id="SSF49772">
    <property type="entry name" value="Ecotin, trypsin inhibitor"/>
    <property type="match status" value="1"/>
</dbReference>
<proteinExistence type="inferred from homology"/>
<protein>
    <recommendedName>
        <fullName evidence="1">Ecotin</fullName>
    </recommendedName>
</protein>
<reference key="1">
    <citation type="journal article" date="2003" name="Nature">
        <title>Genome divergence in two Prochlorococcus ecotypes reflects oceanic niche differentiation.</title>
        <authorList>
            <person name="Rocap G."/>
            <person name="Larimer F.W."/>
            <person name="Lamerdin J.E."/>
            <person name="Malfatti S."/>
            <person name="Chain P."/>
            <person name="Ahlgren N.A."/>
            <person name="Arellano A."/>
            <person name="Coleman M."/>
            <person name="Hauser L."/>
            <person name="Hess W.R."/>
            <person name="Johnson Z.I."/>
            <person name="Land M.L."/>
            <person name="Lindell D."/>
            <person name="Post A.F."/>
            <person name="Regala W."/>
            <person name="Shah M."/>
            <person name="Shaw S.L."/>
            <person name="Steglich C."/>
            <person name="Sullivan M.B."/>
            <person name="Ting C.S."/>
            <person name="Tolonen A."/>
            <person name="Webb E.A."/>
            <person name="Zinser E.R."/>
            <person name="Chisholm S.W."/>
        </authorList>
    </citation>
    <scope>NUCLEOTIDE SEQUENCE [LARGE SCALE GENOMIC DNA]</scope>
    <source>
        <strain>MIT 9313</strain>
    </source>
</reference>
<organism>
    <name type="scientific">Prochlorococcus marinus (strain MIT 9313)</name>
    <dbReference type="NCBI Taxonomy" id="74547"/>
    <lineage>
        <taxon>Bacteria</taxon>
        <taxon>Bacillati</taxon>
        <taxon>Cyanobacteriota</taxon>
        <taxon>Cyanophyceae</taxon>
        <taxon>Synechococcales</taxon>
        <taxon>Prochlorococcaceae</taxon>
        <taxon>Prochlorococcus</taxon>
    </lineage>
</organism>
<keyword id="KW-1015">Disulfide bond</keyword>
<keyword id="KW-0574">Periplasm</keyword>
<keyword id="KW-0646">Protease inhibitor</keyword>
<keyword id="KW-1185">Reference proteome</keyword>
<keyword id="KW-0722">Serine protease inhibitor</keyword>
<keyword id="KW-0732">Signal</keyword>
<feature type="signal peptide" evidence="1">
    <location>
        <begin position="1"/>
        <end position="23"/>
    </location>
</feature>
<feature type="chain" id="PRO_0000007426" description="Ecotin">
    <location>
        <begin position="24"/>
        <end position="177"/>
    </location>
</feature>
<feature type="site" description="Reactive bond" evidence="1">
    <location>
        <begin position="119"/>
        <end position="120"/>
    </location>
</feature>
<feature type="disulfide bond" evidence="1">
    <location>
        <begin position="83"/>
        <end position="122"/>
    </location>
</feature>
<accession>P59839</accession>
<name>ECOT_PROMM</name>
<evidence type="ECO:0000255" key="1">
    <source>
        <dbReference type="HAMAP-Rule" id="MF_00706"/>
    </source>
</evidence>
<comment type="function">
    <text evidence="1">General inhibitor of family S1 serine proteases.</text>
</comment>
<comment type="subunit">
    <text evidence="1">Homodimer.</text>
</comment>
<comment type="subcellular location">
    <subcellularLocation>
        <location evidence="1">Periplasm</location>
    </subcellularLocation>
</comment>
<comment type="similarity">
    <text evidence="1">Belongs to the protease inhibitor I11 (ecotin) family.</text>
</comment>